<dbReference type="EMBL" id="J02685">
    <property type="protein sequence ID" value="AAA36413.1"/>
    <property type="molecule type" value="mRNA"/>
</dbReference>
<dbReference type="EMBL" id="M18082">
    <property type="protein sequence ID" value="AAA60006.1"/>
    <property type="molecule type" value="mRNA"/>
</dbReference>
<dbReference type="EMBL" id="Y00630">
    <property type="protein sequence ID" value="CAA68666.1"/>
    <property type="molecule type" value="mRNA"/>
</dbReference>
<dbReference type="EMBL" id="J03603">
    <property type="protein sequence ID" value="AAA60004.1"/>
    <property type="molecule type" value="mRNA"/>
</dbReference>
<dbReference type="EMBL" id="M24657">
    <property type="protein sequence ID" value="AAA60348.1"/>
    <property type="molecule type" value="Genomic_DNA"/>
</dbReference>
<dbReference type="EMBL" id="M24651">
    <property type="protein sequence ID" value="AAA60348.1"/>
    <property type="status" value="JOINED"/>
    <property type="molecule type" value="Genomic_DNA"/>
</dbReference>
<dbReference type="EMBL" id="M24652">
    <property type="protein sequence ID" value="AAA60348.1"/>
    <property type="status" value="JOINED"/>
    <property type="molecule type" value="Genomic_DNA"/>
</dbReference>
<dbReference type="EMBL" id="M24653">
    <property type="protein sequence ID" value="AAA60348.1"/>
    <property type="status" value="JOINED"/>
    <property type="molecule type" value="Genomic_DNA"/>
</dbReference>
<dbReference type="EMBL" id="M24654">
    <property type="protein sequence ID" value="AAA60348.1"/>
    <property type="status" value="JOINED"/>
    <property type="molecule type" value="Genomic_DNA"/>
</dbReference>
<dbReference type="EMBL" id="M24655">
    <property type="protein sequence ID" value="AAA60348.1"/>
    <property type="status" value="JOINED"/>
    <property type="molecule type" value="Genomic_DNA"/>
</dbReference>
<dbReference type="EMBL" id="M24656">
    <property type="protein sequence ID" value="AAA60348.1"/>
    <property type="status" value="JOINED"/>
    <property type="molecule type" value="Genomic_DNA"/>
</dbReference>
<dbReference type="EMBL" id="M31551">
    <property type="protein sequence ID" value="AAA36797.1"/>
    <property type="molecule type" value="Genomic_DNA"/>
</dbReference>
<dbReference type="EMBL" id="M31547">
    <property type="protein sequence ID" value="AAA36797.1"/>
    <property type="status" value="JOINED"/>
    <property type="molecule type" value="Genomic_DNA"/>
</dbReference>
<dbReference type="EMBL" id="M31548">
    <property type="protein sequence ID" value="AAA36797.1"/>
    <property type="status" value="JOINED"/>
    <property type="molecule type" value="Genomic_DNA"/>
</dbReference>
<dbReference type="EMBL" id="M31549">
    <property type="protein sequence ID" value="AAA36797.1"/>
    <property type="status" value="JOINED"/>
    <property type="molecule type" value="Genomic_DNA"/>
</dbReference>
<dbReference type="EMBL" id="M31550">
    <property type="protein sequence ID" value="AAA36797.1"/>
    <property type="status" value="JOINED"/>
    <property type="molecule type" value="Genomic_DNA"/>
</dbReference>
<dbReference type="EMBL" id="BC012609">
    <property type="protein sequence ID" value="AAH12609.1"/>
    <property type="molecule type" value="mRNA"/>
</dbReference>
<dbReference type="CCDS" id="CCDS11989.1"/>
<dbReference type="PIR" id="A32853">
    <property type="entry name" value="A32853"/>
</dbReference>
<dbReference type="RefSeq" id="NP_001137290.1">
    <property type="nucleotide sequence ID" value="NM_001143818.2"/>
</dbReference>
<dbReference type="RefSeq" id="NP_002566.1">
    <property type="nucleotide sequence ID" value="NM_002575.3"/>
</dbReference>
<dbReference type="RefSeq" id="XP_024306960.1">
    <property type="nucleotide sequence ID" value="XM_024451192.2"/>
</dbReference>
<dbReference type="PDB" id="1BY7">
    <property type="method" value="X-ray"/>
    <property type="resolution" value="2.00 A"/>
    <property type="chains" value="A=1-415"/>
</dbReference>
<dbReference type="PDB" id="1JRR">
    <property type="method" value="X-ray"/>
    <property type="resolution" value="1.60 A"/>
    <property type="chains" value="A=1-415, P=367-380"/>
</dbReference>
<dbReference type="PDB" id="2ARQ">
    <property type="method" value="X-ray"/>
    <property type="resolution" value="1.85 A"/>
    <property type="chains" value="A=1-415, P=367-380"/>
</dbReference>
<dbReference type="PDB" id="2ARR">
    <property type="method" value="X-ray"/>
    <property type="resolution" value="1.55 A"/>
    <property type="chains" value="A=1-415, P=367-380"/>
</dbReference>
<dbReference type="PDBsum" id="1BY7"/>
<dbReference type="PDBsum" id="1JRR"/>
<dbReference type="PDBsum" id="2ARQ"/>
<dbReference type="PDBsum" id="2ARR"/>
<dbReference type="SMR" id="P05120"/>
<dbReference type="BioGRID" id="111092">
    <property type="interactions" value="134"/>
</dbReference>
<dbReference type="CORUM" id="P05120"/>
<dbReference type="FunCoup" id="P05120">
    <property type="interactions" value="321"/>
</dbReference>
<dbReference type="IntAct" id="P05120">
    <property type="interactions" value="87"/>
</dbReference>
<dbReference type="STRING" id="9606.ENSP00000401645"/>
<dbReference type="DrugBank" id="DB12635">
    <property type="generic name" value="Aleplasinin"/>
</dbReference>
<dbReference type="DrugBank" id="DB06245">
    <property type="generic name" value="Lanoteplase"/>
</dbReference>
<dbReference type="DrugBank" id="DB00013">
    <property type="generic name" value="Urokinase"/>
</dbReference>
<dbReference type="MEROPS" id="I04.007"/>
<dbReference type="GlyCosmos" id="P05120">
    <property type="glycosylation" value="3 sites, No reported glycans"/>
</dbReference>
<dbReference type="GlyGen" id="P05120">
    <property type="glycosylation" value="4 sites"/>
</dbReference>
<dbReference type="iPTMnet" id="P05120"/>
<dbReference type="PhosphoSitePlus" id="P05120"/>
<dbReference type="SwissPalm" id="P05120"/>
<dbReference type="BioMuta" id="SERPINB2"/>
<dbReference type="DMDM" id="1352712"/>
<dbReference type="jPOST" id="P05120"/>
<dbReference type="MassIVE" id="P05120"/>
<dbReference type="PaxDb" id="9606-ENSP00000401645"/>
<dbReference type="PeptideAtlas" id="P05120"/>
<dbReference type="ProteomicsDB" id="51801"/>
<dbReference type="Pumba" id="P05120"/>
<dbReference type="Antibodypedia" id="1909">
    <property type="antibodies" value="483 antibodies from 34 providers"/>
</dbReference>
<dbReference type="DNASU" id="5055"/>
<dbReference type="Ensembl" id="ENST00000299502.9">
    <property type="protein sequence ID" value="ENSP00000299502.4"/>
    <property type="gene ID" value="ENSG00000197632.9"/>
</dbReference>
<dbReference type="Ensembl" id="ENST00000457692.5">
    <property type="protein sequence ID" value="ENSP00000401645.1"/>
    <property type="gene ID" value="ENSG00000197632.9"/>
</dbReference>
<dbReference type="GeneID" id="5055"/>
<dbReference type="KEGG" id="hsa:5055"/>
<dbReference type="MANE-Select" id="ENST00000299502.9">
    <property type="protein sequence ID" value="ENSP00000299502.4"/>
    <property type="RefSeq nucleotide sequence ID" value="NM_002575.3"/>
    <property type="RefSeq protein sequence ID" value="NP_002566.1"/>
</dbReference>
<dbReference type="UCSC" id="uc002ljo.4">
    <property type="organism name" value="human"/>
</dbReference>
<dbReference type="AGR" id="HGNC:8584"/>
<dbReference type="CTD" id="5055"/>
<dbReference type="DisGeNET" id="5055"/>
<dbReference type="GeneCards" id="SERPINB2"/>
<dbReference type="HGNC" id="HGNC:8584">
    <property type="gene designation" value="SERPINB2"/>
</dbReference>
<dbReference type="HPA" id="ENSG00000197632">
    <property type="expression patterns" value="Tissue enhanced (esophagus, lymphoid tissue, skin)"/>
</dbReference>
<dbReference type="MIM" id="173390">
    <property type="type" value="gene"/>
</dbReference>
<dbReference type="neXtProt" id="NX_P05120"/>
<dbReference type="OpenTargets" id="ENSG00000197632"/>
<dbReference type="PharmGKB" id="PA35500"/>
<dbReference type="VEuPathDB" id="HostDB:ENSG00000197632"/>
<dbReference type="eggNOG" id="KOG2392">
    <property type="taxonomic scope" value="Eukaryota"/>
</dbReference>
<dbReference type="GeneTree" id="ENSGT00940000161637"/>
<dbReference type="HOGENOM" id="CLU_023330_0_2_1"/>
<dbReference type="InParanoid" id="P05120"/>
<dbReference type="OMA" id="MEDLYVA"/>
<dbReference type="OrthoDB" id="671595at2759"/>
<dbReference type="PAN-GO" id="P05120">
    <property type="GO annotations" value="3 GO annotations based on evolutionary models"/>
</dbReference>
<dbReference type="PhylomeDB" id="P05120"/>
<dbReference type="TreeFam" id="TF352619"/>
<dbReference type="PathwayCommons" id="P05120"/>
<dbReference type="Reactome" id="R-HSA-75205">
    <property type="pathway name" value="Dissolution of Fibrin Clot"/>
</dbReference>
<dbReference type="Reactome" id="R-HSA-8950505">
    <property type="pathway name" value="Gene and protein expression by JAK-STAT signaling after Interleukin-12 stimulation"/>
</dbReference>
<dbReference type="SignaLink" id="P05120"/>
<dbReference type="SIGNOR" id="P05120"/>
<dbReference type="BioGRID-ORCS" id="5055">
    <property type="hits" value="12 hits in 1157 CRISPR screens"/>
</dbReference>
<dbReference type="ChiTaRS" id="SERPINB2">
    <property type="organism name" value="human"/>
</dbReference>
<dbReference type="EvolutionaryTrace" id="P05120"/>
<dbReference type="GeneWiki" id="Plasminogen_activator_inhibitor-2"/>
<dbReference type="GenomeRNAi" id="5055"/>
<dbReference type="Pharos" id="P05120">
    <property type="development level" value="Tbio"/>
</dbReference>
<dbReference type="PRO" id="PR:P05120"/>
<dbReference type="Proteomes" id="UP000005640">
    <property type="component" value="Chromosome 18"/>
</dbReference>
<dbReference type="RNAct" id="P05120">
    <property type="molecule type" value="protein"/>
</dbReference>
<dbReference type="Bgee" id="ENSG00000197632">
    <property type="expression patterns" value="Expressed in amniotic fluid and 116 other cell types or tissues"/>
</dbReference>
<dbReference type="ExpressionAtlas" id="P05120">
    <property type="expression patterns" value="baseline and differential"/>
</dbReference>
<dbReference type="GO" id="GO:0001533">
    <property type="term" value="C:cornified envelope"/>
    <property type="evidence" value="ECO:0007669"/>
    <property type="project" value="Ensembl"/>
</dbReference>
<dbReference type="GO" id="GO:0005737">
    <property type="term" value="C:cytoplasm"/>
    <property type="evidence" value="ECO:0007669"/>
    <property type="project" value="UniProtKB-SubCell"/>
</dbReference>
<dbReference type="GO" id="GO:0005576">
    <property type="term" value="C:extracellular region"/>
    <property type="evidence" value="ECO:0000304"/>
    <property type="project" value="Reactome"/>
</dbReference>
<dbReference type="GO" id="GO:0005615">
    <property type="term" value="C:extracellular space"/>
    <property type="evidence" value="ECO:0000318"/>
    <property type="project" value="GO_Central"/>
</dbReference>
<dbReference type="GO" id="GO:0005886">
    <property type="term" value="C:plasma membrane"/>
    <property type="evidence" value="ECO:0000304"/>
    <property type="project" value="Reactome"/>
</dbReference>
<dbReference type="GO" id="GO:0004867">
    <property type="term" value="F:serine-type endopeptidase inhibitor activity"/>
    <property type="evidence" value="ECO:0000318"/>
    <property type="project" value="GO_Central"/>
</dbReference>
<dbReference type="GO" id="GO:0042730">
    <property type="term" value="P:fibrinolysis"/>
    <property type="evidence" value="ECO:0000304"/>
    <property type="project" value="Reactome"/>
</dbReference>
<dbReference type="GO" id="GO:0043066">
    <property type="term" value="P:negative regulation of apoptotic process"/>
    <property type="evidence" value="ECO:0000304"/>
    <property type="project" value="ProtInc"/>
</dbReference>
<dbReference type="CDD" id="cd19562">
    <property type="entry name" value="serpinB2_PAI-2"/>
    <property type="match status" value="1"/>
</dbReference>
<dbReference type="FunFam" id="2.30.39.10:FF:000001">
    <property type="entry name" value="Serpin family B member 2"/>
    <property type="match status" value="1"/>
</dbReference>
<dbReference type="Gene3D" id="2.30.39.10">
    <property type="entry name" value="Alpha-1-antitrypsin, domain 1"/>
    <property type="match status" value="1"/>
</dbReference>
<dbReference type="Gene3D" id="3.30.497.10">
    <property type="entry name" value="Antithrombin, subunit I, domain 2"/>
    <property type="match status" value="1"/>
</dbReference>
<dbReference type="InterPro" id="IPR015556">
    <property type="entry name" value="PAI-2"/>
</dbReference>
<dbReference type="InterPro" id="IPR023795">
    <property type="entry name" value="Serpin_CS"/>
</dbReference>
<dbReference type="InterPro" id="IPR023796">
    <property type="entry name" value="Serpin_dom"/>
</dbReference>
<dbReference type="InterPro" id="IPR000215">
    <property type="entry name" value="Serpin_fam"/>
</dbReference>
<dbReference type="InterPro" id="IPR036186">
    <property type="entry name" value="Serpin_sf"/>
</dbReference>
<dbReference type="InterPro" id="IPR042178">
    <property type="entry name" value="Serpin_sf_1"/>
</dbReference>
<dbReference type="InterPro" id="IPR042185">
    <property type="entry name" value="Serpin_sf_2"/>
</dbReference>
<dbReference type="PANTHER" id="PTHR11461:SF61">
    <property type="entry name" value="PLASMINOGEN ACTIVATOR INHIBITOR 2"/>
    <property type="match status" value="1"/>
</dbReference>
<dbReference type="PANTHER" id="PTHR11461">
    <property type="entry name" value="SERINE PROTEASE INHIBITOR, SERPIN"/>
    <property type="match status" value="1"/>
</dbReference>
<dbReference type="Pfam" id="PF00079">
    <property type="entry name" value="Serpin"/>
    <property type="match status" value="1"/>
</dbReference>
<dbReference type="SMART" id="SM00093">
    <property type="entry name" value="SERPIN"/>
    <property type="match status" value="1"/>
</dbReference>
<dbReference type="SUPFAM" id="SSF56574">
    <property type="entry name" value="Serpins"/>
    <property type="match status" value="1"/>
</dbReference>
<dbReference type="PROSITE" id="PS00284">
    <property type="entry name" value="SERPIN"/>
    <property type="match status" value="1"/>
</dbReference>
<name>PAI2_HUMAN</name>
<keyword id="KW-0002">3D-structure</keyword>
<keyword id="KW-0963">Cytoplasm</keyword>
<keyword id="KW-0903">Direct protein sequencing</keyword>
<keyword id="KW-1015">Disulfide bond</keyword>
<keyword id="KW-0325">Glycoprotein</keyword>
<keyword id="KW-0617">Plasminogen activation</keyword>
<keyword id="KW-0646">Protease inhibitor</keyword>
<keyword id="KW-1267">Proteomics identification</keyword>
<keyword id="KW-1185">Reference proteome</keyword>
<keyword id="KW-0964">Secreted</keyword>
<keyword id="KW-0722">Serine protease inhibitor</keyword>
<keyword id="KW-0732">Signal</keyword>
<evidence type="ECO:0000255" key="1"/>
<evidence type="ECO:0000269" key="2">
    <source>
    </source>
</evidence>
<evidence type="ECO:0000269" key="3">
    <source>
    </source>
</evidence>
<evidence type="ECO:0000305" key="4"/>
<evidence type="ECO:0007829" key="5">
    <source>
        <dbReference type="PDB" id="1BY7"/>
    </source>
</evidence>
<evidence type="ECO:0007829" key="6">
    <source>
        <dbReference type="PDB" id="2ARR"/>
    </source>
</evidence>
<organism>
    <name type="scientific">Homo sapiens</name>
    <name type="common">Human</name>
    <dbReference type="NCBI Taxonomy" id="9606"/>
    <lineage>
        <taxon>Eukaryota</taxon>
        <taxon>Metazoa</taxon>
        <taxon>Chordata</taxon>
        <taxon>Craniata</taxon>
        <taxon>Vertebrata</taxon>
        <taxon>Euteleostomi</taxon>
        <taxon>Mammalia</taxon>
        <taxon>Eutheria</taxon>
        <taxon>Euarchontoglires</taxon>
        <taxon>Primates</taxon>
        <taxon>Haplorrhini</taxon>
        <taxon>Catarrhini</taxon>
        <taxon>Hominidae</taxon>
        <taxon>Homo</taxon>
    </lineage>
</organism>
<reference key="1">
    <citation type="journal article" date="1987" name="J. Biol. Chem.">
        <title>cDNA cloning and expression in Escherichia coli of a plasminogen activator inhibitor from human placenta.</title>
        <authorList>
            <person name="Ye R.D."/>
            <person name="Wun T.-Z."/>
            <person name="Sadler J.E."/>
        </authorList>
    </citation>
    <scope>NUCLEOTIDE SEQUENCE [MRNA]</scope>
    <source>
        <tissue>Placenta</tissue>
    </source>
</reference>
<reference key="2">
    <citation type="journal article" date="1987" name="Mol. Cell. Biol.">
        <title>Plasminogen activator inhibitor 2: regulation of gene transcription during phorbol ester-mediated differentiation of U-937 human histiocytic lymphoma cells.</title>
        <authorList>
            <person name="Schleuning W.-D."/>
            <person name="Medcalf R.L."/>
            <person name="Hession C."/>
            <person name="Rothenbuhler R."/>
            <person name="Shaw A."/>
            <person name="Kruithof E.K.O."/>
        </authorList>
    </citation>
    <scope>NUCLEOTIDE SEQUENCE [MRNA]</scope>
</reference>
<reference key="3">
    <citation type="journal article" date="1987" name="J. Exp. Med.">
        <title>Human monocyte Arg-Serpin cDNA. Sequence, chromosomal assignment, and homology to plasminogen activator-inhibitor.</title>
        <authorList>
            <person name="Webb A.C."/>
            <person name="Collins K.L."/>
            <person name="Snyder S.F."/>
            <person name="Alexander S.J."/>
            <person name="Rosenwasser L.J."/>
            <person name="Eddy R.L."/>
            <person name="Shows T.B."/>
            <person name="Auron P.E."/>
        </authorList>
    </citation>
    <scope>NUCLEOTIDE SEQUENCE [MRNA]</scope>
    <source>
        <tissue>Monocyte</tissue>
    </source>
</reference>
<reference key="4">
    <citation type="journal article" date="1988" name="Proc. Natl. Acad. Sci. U.S.A.">
        <title>Cloning and expression of a cDNA coding for a human monocyte-derived plasminogen activator inhibitor.</title>
        <authorList>
            <person name="Antalis T.M."/>
            <person name="Clark M.A."/>
            <person name="Barnes T."/>
            <person name="Lehrbach P.R."/>
            <person name="Devine P.L."/>
            <person name="Schevzov G."/>
            <person name="Goss N.H."/>
            <person name="Stephens R.W."/>
            <person name="Tolstoshev P."/>
        </authorList>
    </citation>
    <scope>NUCLEOTIDE SEQUENCE [MRNA]</scope>
    <source>
        <tissue>Monocyte</tissue>
    </source>
</reference>
<reference key="5">
    <citation type="journal article" date="1989" name="J. Biol. Chem.">
        <title>Structure of the gene for human plasminogen activator inhibitor-2. The nearest mammalian homologue of chicken ovalbumin.</title>
        <authorList>
            <person name="Ye R.D."/>
            <person name="Ahern S.M."/>
            <person name="le Beau M.M."/>
            <person name="Lebo R.V."/>
            <person name="Sadler J.E."/>
        </authorList>
    </citation>
    <scope>NUCLEOTIDE SEQUENCE [GENOMIC DNA]</scope>
</reference>
<reference key="6">
    <citation type="journal article" date="1990" name="Genomics">
        <title>Chromosomal organization and localization of the human urokinase inhibitor gene: perfect structural conservation with ovalbumin.</title>
        <authorList>
            <person name="Samia J.A."/>
            <person name="Alexander S.J."/>
            <person name="Horton K.W."/>
            <person name="Auron P.E."/>
            <person name="Byers M.G."/>
            <person name="Shows T.B. Jr."/>
            <person name="Webb A.C."/>
        </authorList>
    </citation>
    <scope>NUCLEOTIDE SEQUENCE [GENOMIC DNA]</scope>
</reference>
<reference key="7">
    <citation type="journal article" date="2004" name="Genome Res.">
        <title>The status, quality, and expansion of the NIH full-length cDNA project: the Mammalian Gene Collection (MGC).</title>
        <authorList>
            <consortium name="The MGC Project Team"/>
        </authorList>
    </citation>
    <scope>NUCLEOTIDE SEQUENCE [LARGE SCALE MRNA]</scope>
    <source>
        <tissue>Brain</tissue>
    </source>
</reference>
<reference key="8">
    <citation type="journal article" date="1992" name="Electrophoresis">
        <title>Microsequences of 145 proteins recorded in the two-dimensional gel protein database of normal human epidermal keratinocytes.</title>
        <authorList>
            <person name="Rasmussen H.H."/>
            <person name="van Damme J."/>
            <person name="Puype M."/>
            <person name="Gesser B."/>
            <person name="Celis J.E."/>
            <person name="Vandekerckhove J."/>
        </authorList>
    </citation>
    <scope>PROTEIN SEQUENCE OF 12-17; 103-108 AND 314-321</scope>
</reference>
<reference key="9">
    <citation type="journal article" date="2004" name="Acta Biochim. Biophys. Sin.">
        <title>Interaction of plasminogen activator inhibitor-2 and proteasome subunit, beta type 1.</title>
        <authorList>
            <person name="Fan J."/>
            <person name="Zhang Y.Q."/>
            <person name="Li P."/>
            <person name="Hou M."/>
            <person name="Tan L."/>
            <person name="Wang X."/>
            <person name="Zhu Y.S."/>
        </authorList>
    </citation>
    <scope>INTERACTION WITH PSMB1</scope>
</reference>
<reference key="10">
    <citation type="journal article" date="2011" name="BMC Syst. Biol.">
        <title>Initial characterization of the human central proteome.</title>
        <authorList>
            <person name="Burkard T.R."/>
            <person name="Planyavsky M."/>
            <person name="Kaupe I."/>
            <person name="Breitwieser F.P."/>
            <person name="Buerckstuemmer T."/>
            <person name="Bennett K.L."/>
            <person name="Superti-Furga G."/>
            <person name="Colinge J."/>
        </authorList>
    </citation>
    <scope>IDENTIFICATION BY MASS SPECTROMETRY [LARGE SCALE ANALYSIS]</scope>
</reference>
<reference key="11">
    <citation type="journal article" date="1999" name="Structure">
        <title>The crystal structure of plasminogen activator inhibitor 2 at 2.0-A resolution: implications for serpin function.</title>
        <authorList>
            <person name="Harrop S.J."/>
            <person name="Jankova L."/>
            <person name="Coles M."/>
            <person name="Jardine D."/>
            <person name="Whittaker J.S."/>
            <person name="Gould A.R."/>
            <person name="Meister A."/>
            <person name="King G.C."/>
            <person name="Mabbutt B.C."/>
            <person name="Curmi P.M.G."/>
        </authorList>
    </citation>
    <scope>X-RAY CRYSTALLOGRAPHY (2.0 ANGSTROMS)</scope>
</reference>
<reference key="12">
    <citation type="journal article" date="1999" name="Nat. Genet.">
        <title>Characterization of single-nucleotide polymorphisms in coding regions of human genes.</title>
        <authorList>
            <person name="Cargill M."/>
            <person name="Altshuler D."/>
            <person name="Ireland J."/>
            <person name="Sklar P."/>
            <person name="Ardlie K."/>
            <person name="Patil N."/>
            <person name="Shaw N."/>
            <person name="Lane C.R."/>
            <person name="Lim E.P."/>
            <person name="Kalyanaraman N."/>
            <person name="Nemesh J."/>
            <person name="Ziaugra L."/>
            <person name="Friedland L."/>
            <person name="Rolfe A."/>
            <person name="Warrington J."/>
            <person name="Lipshutz R."/>
            <person name="Daley G.Q."/>
            <person name="Lander E.S."/>
        </authorList>
    </citation>
    <scope>VARIANTS ASP-120; HIS-229; LYS-404 AND CYS-413</scope>
</reference>
<reference key="13">
    <citation type="journal article" date="1999" name="Nat. Genet.">
        <authorList>
            <person name="Cargill M."/>
            <person name="Altshuler D."/>
            <person name="Ireland J."/>
            <person name="Sklar P."/>
            <person name="Ardlie K."/>
            <person name="Patil N."/>
            <person name="Shaw N."/>
            <person name="Lane C.R."/>
            <person name="Lim E.P."/>
            <person name="Kalyanaraman N."/>
            <person name="Nemesh J."/>
            <person name="Ziaugra L."/>
            <person name="Friedland L."/>
            <person name="Rolfe A."/>
            <person name="Warrington J."/>
            <person name="Lipshutz R."/>
            <person name="Daley G.Q."/>
            <person name="Lander E.S."/>
        </authorList>
    </citation>
    <scope>ERRATUM OF PUBMED:10391209</scope>
</reference>
<proteinExistence type="evidence at protein level"/>
<comment type="function">
    <text>Inhibits urokinase-type plasminogen activator. The monocyte derived PAI-2 is distinct from the endothelial cell-derived PAI-1.</text>
</comment>
<comment type="subunit">
    <text evidence="3">Interacts with PSMB1.</text>
</comment>
<comment type="subcellular location">
    <subcellularLocation>
        <location>Cytoplasm</location>
    </subcellularLocation>
    <subcellularLocation>
        <location>Secreted</location>
        <location>Extracellular space</location>
    </subcellularLocation>
</comment>
<comment type="PTM">
    <text>The signal sequence is not cleaved.</text>
</comment>
<comment type="similarity">
    <text evidence="4">Belongs to the serpin family. Ov-serpin subfamily.</text>
</comment>
<protein>
    <recommendedName>
        <fullName>Plasminogen activator inhibitor 2</fullName>
        <shortName>PAI-2</shortName>
    </recommendedName>
    <alternativeName>
        <fullName>Monocyte Arg-serpin</fullName>
    </alternativeName>
    <alternativeName>
        <fullName>Placental plasminogen activator inhibitor</fullName>
    </alternativeName>
    <alternativeName>
        <fullName>Serpin B2</fullName>
    </alternativeName>
    <alternativeName>
        <fullName>Urokinase inhibitor</fullName>
    </alternativeName>
</protein>
<gene>
    <name type="primary">SERPINB2</name>
    <name type="synonym">PAI2</name>
    <name type="synonym">PLANH2</name>
</gene>
<feature type="chain" id="PRO_0000223296" description="Plasminogen activator inhibitor 2">
    <location>
        <begin position="1"/>
        <end position="415"/>
    </location>
</feature>
<feature type="signal peptide" description="Not cleaved">
    <location>
        <begin position="1"/>
        <end status="unknown"/>
    </location>
</feature>
<feature type="site" description="Reactive bond">
    <location>
        <begin position="380"/>
        <end position="381"/>
    </location>
</feature>
<feature type="glycosylation site" description="N-linked (GlcNAc...) asparagine" evidence="1">
    <location>
        <position position="75"/>
    </location>
</feature>
<feature type="glycosylation site" description="N-linked (GlcNAc...) asparagine" evidence="1">
    <location>
        <position position="115"/>
    </location>
</feature>
<feature type="glycosylation site" description="N-linked (GlcNAc...) asparagine" evidence="1">
    <location>
        <position position="339"/>
    </location>
</feature>
<feature type="disulfide bond">
    <location>
        <begin position="5"/>
        <end position="405"/>
    </location>
</feature>
<feature type="sequence variant" id="VAR_011743" description="In dbSNP:rs6098." evidence="2">
    <original>N</original>
    <variation>D</variation>
    <location>
        <position position="120"/>
    </location>
</feature>
<feature type="sequence variant" id="VAR_014173" description="In dbSNP:rs6100." evidence="2">
    <original>R</original>
    <variation>H</variation>
    <location>
        <position position="229"/>
    </location>
</feature>
<feature type="sequence variant" id="VAR_051946" description="In dbSNP:rs34066931.">
    <original>G</original>
    <variation>A</variation>
    <location>
        <position position="374"/>
    </location>
</feature>
<feature type="sequence variant" id="VAR_011744" description="In dbSNP:rs6103." evidence="2">
    <original>N</original>
    <variation>K</variation>
    <location>
        <position position="404"/>
    </location>
</feature>
<feature type="sequence variant" id="VAR_011745" description="In dbSNP:rs6104." evidence="2">
    <original>S</original>
    <variation>C</variation>
    <location>
        <position position="413"/>
    </location>
</feature>
<feature type="sequence conflict" description="In Ref. 7; AAH12609." evidence="4" ref="7">
    <original>N</original>
    <variation>Y</variation>
    <location>
        <position position="170"/>
    </location>
</feature>
<feature type="helix" evidence="6">
    <location>
        <begin position="6"/>
        <end position="22"/>
    </location>
</feature>
<feature type="strand" evidence="6">
    <location>
        <begin position="24"/>
        <end position="26"/>
    </location>
</feature>
<feature type="strand" evidence="6">
    <location>
        <begin position="28"/>
        <end position="30"/>
    </location>
</feature>
<feature type="helix" evidence="6">
    <location>
        <begin position="32"/>
        <end position="45"/>
    </location>
</feature>
<feature type="helix" evidence="6">
    <location>
        <begin position="48"/>
        <end position="57"/>
    </location>
</feature>
<feature type="turn" evidence="6">
    <location>
        <begin position="58"/>
        <end position="62"/>
    </location>
</feature>
<feature type="helix" evidence="5">
    <location>
        <begin position="100"/>
        <end position="102"/>
    </location>
</feature>
<feature type="helix" evidence="6">
    <location>
        <begin position="103"/>
        <end position="115"/>
    </location>
</feature>
<feature type="strand" evidence="6">
    <location>
        <begin position="122"/>
        <end position="132"/>
    </location>
</feature>
<feature type="helix" evidence="6">
    <location>
        <begin position="139"/>
        <end position="149"/>
    </location>
</feature>
<feature type="strand" evidence="6">
    <location>
        <begin position="154"/>
        <end position="156"/>
    </location>
</feature>
<feature type="helix" evidence="6">
    <location>
        <begin position="158"/>
        <end position="176"/>
    </location>
</feature>
<feature type="turn" evidence="6">
    <location>
        <begin position="177"/>
        <end position="179"/>
    </location>
</feature>
<feature type="strand" evidence="6">
    <location>
        <begin position="194"/>
        <end position="205"/>
    </location>
</feature>
<feature type="strand" evidence="6">
    <location>
        <begin position="208"/>
        <end position="210"/>
    </location>
</feature>
<feature type="strand" evidence="6">
    <location>
        <begin position="220"/>
        <end position="225"/>
    </location>
</feature>
<feature type="strand" evidence="6">
    <location>
        <begin position="228"/>
        <end position="232"/>
    </location>
</feature>
<feature type="strand" evidence="6">
    <location>
        <begin position="234"/>
        <end position="246"/>
    </location>
</feature>
<feature type="helix" evidence="6">
    <location>
        <begin position="247"/>
        <end position="249"/>
    </location>
</feature>
<feature type="strand" evidence="6">
    <location>
        <begin position="251"/>
        <end position="269"/>
    </location>
</feature>
<feature type="strand" evidence="6">
    <location>
        <begin position="275"/>
        <end position="278"/>
    </location>
</feature>
<feature type="helix" evidence="6">
    <location>
        <begin position="280"/>
        <end position="285"/>
    </location>
</feature>
<feature type="helix" evidence="6">
    <location>
        <begin position="288"/>
        <end position="295"/>
    </location>
</feature>
<feature type="turn" evidence="5">
    <location>
        <begin position="297"/>
        <end position="299"/>
    </location>
</feature>
<feature type="strand" evidence="6">
    <location>
        <begin position="301"/>
        <end position="310"/>
    </location>
</feature>
<feature type="strand" evidence="6">
    <location>
        <begin position="312"/>
        <end position="319"/>
    </location>
</feature>
<feature type="helix" evidence="6">
    <location>
        <begin position="321"/>
        <end position="327"/>
    </location>
</feature>
<feature type="helix" evidence="6">
    <location>
        <begin position="331"/>
        <end position="333"/>
    </location>
</feature>
<feature type="turn" evidence="6">
    <location>
        <begin position="335"/>
        <end position="337"/>
    </location>
</feature>
<feature type="turn" evidence="6">
    <location>
        <begin position="341"/>
        <end position="343"/>
    </location>
</feature>
<feature type="strand" evidence="6">
    <location>
        <begin position="349"/>
        <end position="362"/>
    </location>
</feature>
<feature type="strand" evidence="6">
    <location>
        <begin position="368"/>
        <end position="379"/>
    </location>
</feature>
<feature type="strand" evidence="6">
    <location>
        <begin position="387"/>
        <end position="389"/>
    </location>
</feature>
<feature type="strand" evidence="6">
    <location>
        <begin position="394"/>
        <end position="400"/>
    </location>
</feature>
<feature type="turn" evidence="6">
    <location>
        <begin position="401"/>
        <end position="404"/>
    </location>
</feature>
<feature type="strand" evidence="6">
    <location>
        <begin position="405"/>
        <end position="412"/>
    </location>
</feature>
<accession>P05120</accession>
<accession>Q96E96</accession>
<sequence length="415" mass="46596">MEDLCVANTLFALNLFKHLAKASPTQNLFLSPWSISSTMAMVYMGSRGSTEDQMAKVLQFNEVGANAVTPMTPENFTSCGFMQQIQKGSYPDAILQAQAADKIHSSFRSLSSAINASTGNYLLESVNKLFGEKSASFREEYIRLCQKYYSSEPQAVDFLECAEEARKKINSWVKTQTKGKIPNLLPEGSVDGDTRMVLVNAVYFKGKWKTPFEKKLNGLYPFRVNSAQRTPVQMMYLREKLNIGYIEDLKAQILELPYAGDVSMFLLLPDEIADVSTGLELLESEITYDKLNKWTSKDKMAEDEVEVYIPQFKLEEHYELRSILRSMGMEDAFNKGRANFSGMSERNDLFLSEVFHQAMVDVNEEGTEAAAGTGGVMTGRTGHGGPQFVADHPFLFLIMHKITNCILFFGRFSSP</sequence>